<proteinExistence type="inferred from homology"/>
<name>MTGA_ECOLU</name>
<protein>
    <recommendedName>
        <fullName evidence="1">Biosynthetic peptidoglycan transglycosylase</fullName>
        <ecNumber evidence="1">2.4.99.28</ecNumber>
    </recommendedName>
    <alternativeName>
        <fullName evidence="1">Glycan polymerase</fullName>
    </alternativeName>
    <alternativeName>
        <fullName evidence="1">Peptidoglycan glycosyltransferase MtgA</fullName>
        <shortName evidence="1">PGT</shortName>
    </alternativeName>
</protein>
<comment type="function">
    <text evidence="1">Peptidoglycan polymerase that catalyzes glycan chain elongation from lipid-linked precursors.</text>
</comment>
<comment type="catalytic activity">
    <reaction evidence="1">
        <text>[GlcNAc-(1-&gt;4)-Mur2Ac(oyl-L-Ala-gamma-D-Glu-L-Lys-D-Ala-D-Ala)](n)-di-trans,octa-cis-undecaprenyl diphosphate + beta-D-GlcNAc-(1-&gt;4)-Mur2Ac(oyl-L-Ala-gamma-D-Glu-L-Lys-D-Ala-D-Ala)-di-trans,octa-cis-undecaprenyl diphosphate = [GlcNAc-(1-&gt;4)-Mur2Ac(oyl-L-Ala-gamma-D-Glu-L-Lys-D-Ala-D-Ala)](n+1)-di-trans,octa-cis-undecaprenyl diphosphate + di-trans,octa-cis-undecaprenyl diphosphate + H(+)</text>
        <dbReference type="Rhea" id="RHEA:23708"/>
        <dbReference type="Rhea" id="RHEA-COMP:9602"/>
        <dbReference type="Rhea" id="RHEA-COMP:9603"/>
        <dbReference type="ChEBI" id="CHEBI:15378"/>
        <dbReference type="ChEBI" id="CHEBI:58405"/>
        <dbReference type="ChEBI" id="CHEBI:60033"/>
        <dbReference type="ChEBI" id="CHEBI:78435"/>
        <dbReference type="EC" id="2.4.99.28"/>
    </reaction>
</comment>
<comment type="pathway">
    <text evidence="1">Cell wall biogenesis; peptidoglycan biosynthesis.</text>
</comment>
<comment type="subcellular location">
    <subcellularLocation>
        <location evidence="1">Cell inner membrane</location>
        <topology evidence="1">Single-pass membrane protein</topology>
    </subcellularLocation>
</comment>
<comment type="similarity">
    <text evidence="1">Belongs to the glycosyltransferase 51 family.</text>
</comment>
<organism>
    <name type="scientific">Escherichia coli O17:K52:H18 (strain UMN026 / ExPEC)</name>
    <dbReference type="NCBI Taxonomy" id="585056"/>
    <lineage>
        <taxon>Bacteria</taxon>
        <taxon>Pseudomonadati</taxon>
        <taxon>Pseudomonadota</taxon>
        <taxon>Gammaproteobacteria</taxon>
        <taxon>Enterobacterales</taxon>
        <taxon>Enterobacteriaceae</taxon>
        <taxon>Escherichia</taxon>
    </lineage>
</organism>
<accession>B7NDJ2</accession>
<dbReference type="EC" id="2.4.99.28" evidence="1"/>
<dbReference type="EMBL" id="CU928163">
    <property type="protein sequence ID" value="CAR14842.1"/>
    <property type="molecule type" value="Genomic_DNA"/>
</dbReference>
<dbReference type="RefSeq" id="WP_000047073.1">
    <property type="nucleotide sequence ID" value="NC_011751.1"/>
</dbReference>
<dbReference type="RefSeq" id="YP_002414347.1">
    <property type="nucleotide sequence ID" value="NC_011751.1"/>
</dbReference>
<dbReference type="SMR" id="B7NDJ2"/>
<dbReference type="STRING" id="585056.ECUMN_3688"/>
<dbReference type="CAZy" id="GT51">
    <property type="family name" value="Glycosyltransferase Family 51"/>
</dbReference>
<dbReference type="KEGG" id="eum:ECUMN_3688"/>
<dbReference type="PATRIC" id="fig|585056.7.peg.3868"/>
<dbReference type="HOGENOM" id="CLU_006354_1_1_6"/>
<dbReference type="UniPathway" id="UPA00219"/>
<dbReference type="Proteomes" id="UP000007097">
    <property type="component" value="Chromosome"/>
</dbReference>
<dbReference type="GO" id="GO:0009274">
    <property type="term" value="C:peptidoglycan-based cell wall"/>
    <property type="evidence" value="ECO:0007669"/>
    <property type="project" value="InterPro"/>
</dbReference>
<dbReference type="GO" id="GO:0005886">
    <property type="term" value="C:plasma membrane"/>
    <property type="evidence" value="ECO:0007669"/>
    <property type="project" value="UniProtKB-SubCell"/>
</dbReference>
<dbReference type="GO" id="GO:0016763">
    <property type="term" value="F:pentosyltransferase activity"/>
    <property type="evidence" value="ECO:0007669"/>
    <property type="project" value="InterPro"/>
</dbReference>
<dbReference type="GO" id="GO:0008955">
    <property type="term" value="F:peptidoglycan glycosyltransferase activity"/>
    <property type="evidence" value="ECO:0007669"/>
    <property type="project" value="UniProtKB-UniRule"/>
</dbReference>
<dbReference type="GO" id="GO:0071555">
    <property type="term" value="P:cell wall organization"/>
    <property type="evidence" value="ECO:0007669"/>
    <property type="project" value="UniProtKB-KW"/>
</dbReference>
<dbReference type="GO" id="GO:0009252">
    <property type="term" value="P:peptidoglycan biosynthetic process"/>
    <property type="evidence" value="ECO:0007669"/>
    <property type="project" value="UniProtKB-UniRule"/>
</dbReference>
<dbReference type="GO" id="GO:0008360">
    <property type="term" value="P:regulation of cell shape"/>
    <property type="evidence" value="ECO:0007669"/>
    <property type="project" value="UniProtKB-KW"/>
</dbReference>
<dbReference type="FunFam" id="1.10.3810.10:FF:000004">
    <property type="entry name" value="Biosynthetic peptidoglycan transglycosylase"/>
    <property type="match status" value="1"/>
</dbReference>
<dbReference type="Gene3D" id="1.10.3810.10">
    <property type="entry name" value="Biosynthetic peptidoglycan transglycosylase-like"/>
    <property type="match status" value="1"/>
</dbReference>
<dbReference type="HAMAP" id="MF_00766">
    <property type="entry name" value="PGT_MtgA"/>
    <property type="match status" value="1"/>
</dbReference>
<dbReference type="InterPro" id="IPR001264">
    <property type="entry name" value="Glyco_trans_51"/>
</dbReference>
<dbReference type="InterPro" id="IPR023346">
    <property type="entry name" value="Lysozyme-like_dom_sf"/>
</dbReference>
<dbReference type="InterPro" id="IPR036950">
    <property type="entry name" value="PBP_transglycosylase"/>
</dbReference>
<dbReference type="InterPro" id="IPR011812">
    <property type="entry name" value="Pep_trsgly"/>
</dbReference>
<dbReference type="NCBIfam" id="TIGR02070">
    <property type="entry name" value="mono_pep_trsgly"/>
    <property type="match status" value="1"/>
</dbReference>
<dbReference type="PANTHER" id="PTHR30400:SF0">
    <property type="entry name" value="BIOSYNTHETIC PEPTIDOGLYCAN TRANSGLYCOSYLASE"/>
    <property type="match status" value="1"/>
</dbReference>
<dbReference type="PANTHER" id="PTHR30400">
    <property type="entry name" value="MONOFUNCTIONAL BIOSYNTHETIC PEPTIDOGLYCAN TRANSGLYCOSYLASE"/>
    <property type="match status" value="1"/>
</dbReference>
<dbReference type="Pfam" id="PF00912">
    <property type="entry name" value="Transgly"/>
    <property type="match status" value="1"/>
</dbReference>
<dbReference type="SUPFAM" id="SSF53955">
    <property type="entry name" value="Lysozyme-like"/>
    <property type="match status" value="1"/>
</dbReference>
<feature type="chain" id="PRO_1000133595" description="Biosynthetic peptidoglycan transglycosylase">
    <location>
        <begin position="1"/>
        <end position="242"/>
    </location>
</feature>
<feature type="transmembrane region" description="Helical" evidence="1">
    <location>
        <begin position="19"/>
        <end position="39"/>
    </location>
</feature>
<reference key="1">
    <citation type="journal article" date="2009" name="PLoS Genet.">
        <title>Organised genome dynamics in the Escherichia coli species results in highly diverse adaptive paths.</title>
        <authorList>
            <person name="Touchon M."/>
            <person name="Hoede C."/>
            <person name="Tenaillon O."/>
            <person name="Barbe V."/>
            <person name="Baeriswyl S."/>
            <person name="Bidet P."/>
            <person name="Bingen E."/>
            <person name="Bonacorsi S."/>
            <person name="Bouchier C."/>
            <person name="Bouvet O."/>
            <person name="Calteau A."/>
            <person name="Chiapello H."/>
            <person name="Clermont O."/>
            <person name="Cruveiller S."/>
            <person name="Danchin A."/>
            <person name="Diard M."/>
            <person name="Dossat C."/>
            <person name="Karoui M.E."/>
            <person name="Frapy E."/>
            <person name="Garry L."/>
            <person name="Ghigo J.M."/>
            <person name="Gilles A.M."/>
            <person name="Johnson J."/>
            <person name="Le Bouguenec C."/>
            <person name="Lescat M."/>
            <person name="Mangenot S."/>
            <person name="Martinez-Jehanne V."/>
            <person name="Matic I."/>
            <person name="Nassif X."/>
            <person name="Oztas S."/>
            <person name="Petit M.A."/>
            <person name="Pichon C."/>
            <person name="Rouy Z."/>
            <person name="Ruf C.S."/>
            <person name="Schneider D."/>
            <person name="Tourret J."/>
            <person name="Vacherie B."/>
            <person name="Vallenet D."/>
            <person name="Medigue C."/>
            <person name="Rocha E.P.C."/>
            <person name="Denamur E."/>
        </authorList>
    </citation>
    <scope>NUCLEOTIDE SEQUENCE [LARGE SCALE GENOMIC DNA]</scope>
    <source>
        <strain>UMN026 / ExPEC</strain>
    </source>
</reference>
<sequence length="242" mass="27257">MSKSRLTVFSFVRRFLLRLMVVLAVFWGGGIALFSVAPVPFSAVMAERQVSAWLHGNFRYVAHSDWVSMDQISPWMGLAVIAAEDQKFPEHWGFDVASIEQALAHNERNENRIRGASTISQQTAKNLFLWDGRSWVRKGLEAGLTLGIETVWSKKRILTVYLNIAEFGDGVFGVEAAAQRYFHKPASKLTRSEAALLAAVLPNPLRFKVSAPSGYVRGRQAWILRQMYQLGGESFMQQHQLD</sequence>
<gene>
    <name evidence="1" type="primary">mtgA</name>
    <name type="ordered locus">ECUMN_3688</name>
</gene>
<keyword id="KW-0997">Cell inner membrane</keyword>
<keyword id="KW-1003">Cell membrane</keyword>
<keyword id="KW-0133">Cell shape</keyword>
<keyword id="KW-0961">Cell wall biogenesis/degradation</keyword>
<keyword id="KW-0328">Glycosyltransferase</keyword>
<keyword id="KW-0472">Membrane</keyword>
<keyword id="KW-0573">Peptidoglycan synthesis</keyword>
<keyword id="KW-0808">Transferase</keyword>
<keyword id="KW-0812">Transmembrane</keyword>
<keyword id="KW-1133">Transmembrane helix</keyword>
<evidence type="ECO:0000255" key="1">
    <source>
        <dbReference type="HAMAP-Rule" id="MF_00766"/>
    </source>
</evidence>